<organism>
    <name type="scientific">Naja annulifera</name>
    <name type="common">Banded Egyptian cobra</name>
    <name type="synonym">Naja haje annulifera</name>
    <dbReference type="NCBI Taxonomy" id="96794"/>
    <lineage>
        <taxon>Eukaryota</taxon>
        <taxon>Metazoa</taxon>
        <taxon>Chordata</taxon>
        <taxon>Craniata</taxon>
        <taxon>Vertebrata</taxon>
        <taxon>Euteleostomi</taxon>
        <taxon>Lepidosauria</taxon>
        <taxon>Squamata</taxon>
        <taxon>Bifurcata</taxon>
        <taxon>Unidentata</taxon>
        <taxon>Episquamata</taxon>
        <taxon>Toxicofera</taxon>
        <taxon>Serpentes</taxon>
        <taxon>Colubroidea</taxon>
        <taxon>Elapidae</taxon>
        <taxon>Elapinae</taxon>
        <taxon>Naja</taxon>
    </lineage>
</organism>
<comment type="function">
    <text evidence="2">Binds to muscle nicotinic acetylcholine receptor (nAChR) and inhibit acetylcholine from binding to the receptor, thereby impairing neuromuscular transmission.</text>
</comment>
<comment type="subcellular location">
    <subcellularLocation>
        <location evidence="3">Secreted</location>
    </subcellularLocation>
</comment>
<comment type="tissue specificity">
    <text evidence="4">Expressed by the venom gland.</text>
</comment>
<comment type="toxic dose">
    <text evidence="3">LD(50) is 62.5 mg/kg by subcutaneous injection.</text>
</comment>
<comment type="similarity">
    <text evidence="4">Belongs to the three-finger toxin family. Short-chain subfamily. Type I alpha-neurotoxin sub-subfamily.</text>
</comment>
<accession>P01421</accession>
<reference key="1">
    <citation type="journal article" date="1975" name="Hoppe-Seyler's Z. Physiol. Chem.">
        <title>The amino acid sequences of three toxins (CM-10, CM-12 and CM-14) from Naja haje annulifera (Egyptian cobra) venom.</title>
        <authorList>
            <person name="Joubert F.J."/>
        </authorList>
    </citation>
    <scope>PROTEIN SEQUENCE</scope>
    <scope>TOXIC DOSE</scope>
    <scope>SUBCELLULAR LOCATION</scope>
    <source>
        <tissue>Venom</tissue>
    </source>
</reference>
<dbReference type="PIR" id="A01690">
    <property type="entry name" value="N1NJ4E"/>
</dbReference>
<dbReference type="SMR" id="P01421"/>
<dbReference type="GO" id="GO:0005576">
    <property type="term" value="C:extracellular region"/>
    <property type="evidence" value="ECO:0007669"/>
    <property type="project" value="UniProtKB-SubCell"/>
</dbReference>
<dbReference type="GO" id="GO:0030550">
    <property type="term" value="F:acetylcholine receptor inhibitor activity"/>
    <property type="evidence" value="ECO:0007669"/>
    <property type="project" value="UniProtKB-KW"/>
</dbReference>
<dbReference type="GO" id="GO:0099106">
    <property type="term" value="F:ion channel regulator activity"/>
    <property type="evidence" value="ECO:0007669"/>
    <property type="project" value="UniProtKB-KW"/>
</dbReference>
<dbReference type="GO" id="GO:0090729">
    <property type="term" value="F:toxin activity"/>
    <property type="evidence" value="ECO:0007669"/>
    <property type="project" value="UniProtKB-KW"/>
</dbReference>
<dbReference type="CDD" id="cd00206">
    <property type="entry name" value="TFP_snake_toxin"/>
    <property type="match status" value="1"/>
</dbReference>
<dbReference type="FunFam" id="2.10.60.10:FF:000024">
    <property type="entry name" value="Cytotoxin 1"/>
    <property type="match status" value="1"/>
</dbReference>
<dbReference type="Gene3D" id="2.10.60.10">
    <property type="entry name" value="CD59"/>
    <property type="match status" value="1"/>
</dbReference>
<dbReference type="InterPro" id="IPR003571">
    <property type="entry name" value="Snake_3FTx"/>
</dbReference>
<dbReference type="InterPro" id="IPR045860">
    <property type="entry name" value="Snake_toxin-like_sf"/>
</dbReference>
<dbReference type="InterPro" id="IPR018354">
    <property type="entry name" value="Snake_toxin_con_site"/>
</dbReference>
<dbReference type="InterPro" id="IPR054131">
    <property type="entry name" value="Toxin_cobra-type"/>
</dbReference>
<dbReference type="Pfam" id="PF21947">
    <property type="entry name" value="Toxin_cobra-type"/>
    <property type="match status" value="1"/>
</dbReference>
<dbReference type="SUPFAM" id="SSF57302">
    <property type="entry name" value="Snake toxin-like"/>
    <property type="match status" value="1"/>
</dbReference>
<dbReference type="PROSITE" id="PS00272">
    <property type="entry name" value="SNAKE_TOXIN"/>
    <property type="match status" value="1"/>
</dbReference>
<keyword id="KW-0008">Acetylcholine receptor inhibiting toxin</keyword>
<keyword id="KW-0903">Direct protein sequencing</keyword>
<keyword id="KW-1015">Disulfide bond</keyword>
<keyword id="KW-0872">Ion channel impairing toxin</keyword>
<keyword id="KW-0528">Neurotoxin</keyword>
<keyword id="KW-0629">Postsynaptic neurotoxin</keyword>
<keyword id="KW-0964">Secreted</keyword>
<keyword id="KW-0800">Toxin</keyword>
<name>3S14_NAJHA</name>
<evidence type="ECO:0000250" key="1">
    <source>
        <dbReference type="UniProtKB" id="P0C1Z0"/>
    </source>
</evidence>
<evidence type="ECO:0000250" key="2">
    <source>
        <dbReference type="UniProtKB" id="P60775"/>
    </source>
</evidence>
<evidence type="ECO:0000269" key="3">
    <source ref="1"/>
</evidence>
<evidence type="ECO:0000305" key="4"/>
<sequence length="61" mass="6913">MICYKQRSLQFPITTVCPGEKNCYKKQWSGHRGTIIERGCGCPSVKKGIEINCCTTDKCNR</sequence>
<protein>
    <recommendedName>
        <fullName>Short neurotoxin 4</fullName>
    </recommendedName>
    <alternativeName>
        <fullName>Toxin CM-12</fullName>
    </alternativeName>
    <alternativeName>
        <fullName>Toxin V-NH-I2</fullName>
    </alternativeName>
</protein>
<feature type="chain" id="PRO_0000093599" description="Short neurotoxin 4" evidence="3">
    <location>
        <begin position="1"/>
        <end position="61"/>
    </location>
</feature>
<feature type="disulfide bond" evidence="1">
    <location>
        <begin position="3"/>
        <end position="23"/>
    </location>
</feature>
<feature type="disulfide bond" evidence="1">
    <location>
        <begin position="17"/>
        <end position="40"/>
    </location>
</feature>
<feature type="disulfide bond" evidence="1">
    <location>
        <begin position="42"/>
        <end position="53"/>
    </location>
</feature>
<feature type="disulfide bond" evidence="1">
    <location>
        <begin position="54"/>
        <end position="59"/>
    </location>
</feature>
<proteinExistence type="evidence at protein level"/>